<protein>
    <recommendedName>
        <fullName evidence="1">L-seryl-tRNA(Sec) selenium transferase</fullName>
        <ecNumber evidence="1">2.9.1.1</ecNumber>
    </recommendedName>
    <alternativeName>
        <fullName evidence="1">Selenocysteine synthase</fullName>
        <shortName evidence="1">Sec synthase</shortName>
    </alternativeName>
    <alternativeName>
        <fullName evidence="1">Selenocysteinyl-tRNA(Sec) synthase</fullName>
    </alternativeName>
</protein>
<evidence type="ECO:0000255" key="1">
    <source>
        <dbReference type="HAMAP-Rule" id="MF_00423"/>
    </source>
</evidence>
<dbReference type="EC" id="2.9.1.1" evidence="1"/>
<dbReference type="EMBL" id="CP000266">
    <property type="protein sequence ID" value="ABF05950.1"/>
    <property type="molecule type" value="Genomic_DNA"/>
</dbReference>
<dbReference type="RefSeq" id="WP_000206284.1">
    <property type="nucleotide sequence ID" value="NC_008258.1"/>
</dbReference>
<dbReference type="SMR" id="Q0SYB5"/>
<dbReference type="KEGG" id="sfv:SFV_3942"/>
<dbReference type="HOGENOM" id="CLU_038142_1_0_6"/>
<dbReference type="UniPathway" id="UPA00906">
    <property type="reaction ID" value="UER00896"/>
</dbReference>
<dbReference type="Proteomes" id="UP000000659">
    <property type="component" value="Chromosome"/>
</dbReference>
<dbReference type="GO" id="GO:0005737">
    <property type="term" value="C:cytoplasm"/>
    <property type="evidence" value="ECO:0007669"/>
    <property type="project" value="UniProtKB-SubCell"/>
</dbReference>
<dbReference type="GO" id="GO:0004125">
    <property type="term" value="F:L-seryl-tRNA(Sec) selenium transferase activity"/>
    <property type="evidence" value="ECO:0007669"/>
    <property type="project" value="UniProtKB-UniRule"/>
</dbReference>
<dbReference type="GO" id="GO:0001717">
    <property type="term" value="P:conversion of seryl-tRNAsec to selenocys-tRNAsec"/>
    <property type="evidence" value="ECO:0007669"/>
    <property type="project" value="UniProtKB-UniRule"/>
</dbReference>
<dbReference type="GO" id="GO:0001514">
    <property type="term" value="P:selenocysteine incorporation"/>
    <property type="evidence" value="ECO:0007669"/>
    <property type="project" value="UniProtKB-UniRule"/>
</dbReference>
<dbReference type="FunFam" id="3.40.640.10:FF:000028">
    <property type="entry name" value="L-seryl-tRNA(Sec) selenium transferase"/>
    <property type="match status" value="1"/>
</dbReference>
<dbReference type="FunFam" id="3.90.1150.180:FF:000001">
    <property type="entry name" value="L-seryl-tRNA(Sec) selenium transferase"/>
    <property type="match status" value="1"/>
</dbReference>
<dbReference type="Gene3D" id="3.90.1150.180">
    <property type="match status" value="1"/>
</dbReference>
<dbReference type="Gene3D" id="3.40.640.10">
    <property type="entry name" value="Type I PLP-dependent aspartate aminotransferase-like (Major domain)"/>
    <property type="match status" value="1"/>
</dbReference>
<dbReference type="HAMAP" id="MF_00423">
    <property type="entry name" value="SelA"/>
    <property type="match status" value="1"/>
</dbReference>
<dbReference type="InterPro" id="IPR015424">
    <property type="entry name" value="PyrdxlP-dep_Trfase"/>
</dbReference>
<dbReference type="InterPro" id="IPR015421">
    <property type="entry name" value="PyrdxlP-dep_Trfase_major"/>
</dbReference>
<dbReference type="InterPro" id="IPR018319">
    <property type="entry name" value="SelA-like"/>
</dbReference>
<dbReference type="InterPro" id="IPR004534">
    <property type="entry name" value="SelA_trans"/>
</dbReference>
<dbReference type="InterPro" id="IPR025862">
    <property type="entry name" value="SelA_trans_N_dom"/>
</dbReference>
<dbReference type="NCBIfam" id="TIGR00474">
    <property type="entry name" value="selA"/>
    <property type="match status" value="1"/>
</dbReference>
<dbReference type="PANTHER" id="PTHR32328">
    <property type="entry name" value="L-SERYL-TRNA(SEC) SELENIUM TRANSFERASE"/>
    <property type="match status" value="1"/>
</dbReference>
<dbReference type="PANTHER" id="PTHR32328:SF0">
    <property type="entry name" value="L-SERYL-TRNA(SEC) SELENIUM TRANSFERASE"/>
    <property type="match status" value="1"/>
</dbReference>
<dbReference type="Pfam" id="PF12390">
    <property type="entry name" value="Se-cys_synth_N"/>
    <property type="match status" value="1"/>
</dbReference>
<dbReference type="Pfam" id="PF03841">
    <property type="entry name" value="SelA"/>
    <property type="match status" value="1"/>
</dbReference>
<dbReference type="SUPFAM" id="SSF53383">
    <property type="entry name" value="PLP-dependent transferases"/>
    <property type="match status" value="1"/>
</dbReference>
<organism>
    <name type="scientific">Shigella flexneri serotype 5b (strain 8401)</name>
    <dbReference type="NCBI Taxonomy" id="373384"/>
    <lineage>
        <taxon>Bacteria</taxon>
        <taxon>Pseudomonadati</taxon>
        <taxon>Pseudomonadota</taxon>
        <taxon>Gammaproteobacteria</taxon>
        <taxon>Enterobacterales</taxon>
        <taxon>Enterobacteriaceae</taxon>
        <taxon>Shigella</taxon>
    </lineage>
</organism>
<keyword id="KW-0963">Cytoplasm</keyword>
<keyword id="KW-0648">Protein biosynthesis</keyword>
<keyword id="KW-0663">Pyridoxal phosphate</keyword>
<keyword id="KW-0711">Selenium</keyword>
<keyword id="KW-0808">Transferase</keyword>
<reference key="1">
    <citation type="journal article" date="2006" name="BMC Genomics">
        <title>Complete genome sequence of Shigella flexneri 5b and comparison with Shigella flexneri 2a.</title>
        <authorList>
            <person name="Nie H."/>
            <person name="Yang F."/>
            <person name="Zhang X."/>
            <person name="Yang J."/>
            <person name="Chen L."/>
            <person name="Wang J."/>
            <person name="Xiong Z."/>
            <person name="Peng J."/>
            <person name="Sun L."/>
            <person name="Dong J."/>
            <person name="Xue Y."/>
            <person name="Xu X."/>
            <person name="Chen S."/>
            <person name="Yao Z."/>
            <person name="Shen Y."/>
            <person name="Jin Q."/>
        </authorList>
    </citation>
    <scope>NUCLEOTIDE SEQUENCE [LARGE SCALE GENOMIC DNA]</scope>
    <source>
        <strain>8401</strain>
    </source>
</reference>
<sequence>MTTETRSLYSQLPAIDRLLRDSSFLSLRDTYGHTRVVELLRQMLDEAREVIRGSQTLPAWCENWAQEVDARLTKEAQSALRPVINLTGTVLHTNLGRALQAEAAVEAVAQAMRSPVTLEYDLDDAGRGHRDRALAQLLRRITGAEDACIVNNNAAAVLLMLAATASGKEVVVSRGELVEIGGAFRIPDVMRQAGCTLHEVGTTNRTHANDYRQAVNENTALLMKVHTSNYSIQGFTKAIDEAELVALGKELDVPVVTDLGSGSLVDLSQYGLPKEPMPQELIAAGVSLVSFSGDKLLGGPQAGIIVGKKEMIARLQSHPLKRALRADKMTLAALEATLRLYLHPEALSEKLPTLRLLTRSAEVIQIQAQRLQAPLVAHYGAEFAVQVMPCLSQIGSGSLPVDRLPSAALTFTPHDGRGSHLESLAARWRELPVPVIGRIYDGRLWLDLRCLEDEQRFLEMLLK</sequence>
<comment type="function">
    <text evidence="1">Converts seryl-tRNA(Sec) to selenocysteinyl-tRNA(Sec) required for selenoprotein biosynthesis.</text>
</comment>
<comment type="catalytic activity">
    <reaction evidence="1">
        <text>L-seryl-tRNA(Sec) + selenophosphate + H(+) = L-selenocysteinyl-tRNA(Sec) + phosphate</text>
        <dbReference type="Rhea" id="RHEA:22728"/>
        <dbReference type="Rhea" id="RHEA-COMP:9742"/>
        <dbReference type="Rhea" id="RHEA-COMP:9743"/>
        <dbReference type="ChEBI" id="CHEBI:15378"/>
        <dbReference type="ChEBI" id="CHEBI:16144"/>
        <dbReference type="ChEBI" id="CHEBI:43474"/>
        <dbReference type="ChEBI" id="CHEBI:78533"/>
        <dbReference type="ChEBI" id="CHEBI:78573"/>
        <dbReference type="EC" id="2.9.1.1"/>
    </reaction>
</comment>
<comment type="cofactor">
    <cofactor evidence="1">
        <name>pyridoxal 5'-phosphate</name>
        <dbReference type="ChEBI" id="CHEBI:597326"/>
    </cofactor>
</comment>
<comment type="pathway">
    <text evidence="1">Aminoacyl-tRNA biosynthesis; selenocysteinyl-tRNA(Sec) biosynthesis; selenocysteinyl-tRNA(Sec) from L-seryl-tRNA(Sec) (bacterial route): step 1/1.</text>
</comment>
<comment type="subunit">
    <text evidence="1">Homodecamer; pentamer of dimers. Binds only one seryl-tRNA(Sec) per dimer.</text>
</comment>
<comment type="subcellular location">
    <subcellularLocation>
        <location evidence="1">Cytoplasm</location>
    </subcellularLocation>
</comment>
<comment type="similarity">
    <text evidence="1">Belongs to the SelA family.</text>
</comment>
<gene>
    <name evidence="1" type="primary">selA</name>
    <name type="ordered locus">SFV_3942</name>
</gene>
<accession>Q0SYB5</accession>
<proteinExistence type="inferred from homology"/>
<feature type="chain" id="PRO_1000050383" description="L-seryl-tRNA(Sec) selenium transferase">
    <location>
        <begin position="1"/>
        <end position="463"/>
    </location>
</feature>
<feature type="modified residue" description="N6-(pyridoxal phosphate)lysine" evidence="1">
    <location>
        <position position="295"/>
    </location>
</feature>
<name>SELA_SHIF8</name>